<proteinExistence type="inferred from homology"/>
<sequence length="366" mass="38386">MAAANRTLMVMAGGTGGHVYPALAVAETLRERGWSVFWLGTRAGLEARVVPAAGIDMVWVSMGGVRGKGLVKKLLLPAMLLVAFAQSLGAILRRRPDVVLGMGGYTAFPGGMMASLLNRPLVVHEQNSVGGLTNRLLACLADRVLTAFPAVFTHAHDKPIPCRRVSAEWVGNPVRGDITAAPAGERAARSGPLRLLVVGGSLGASALNELVPRALALLPEAQRPRVVHQSGRRHVDALRAGYAAAAVDAEVRDYIDDMAAAYRDCDFAICRAGAMTVAELACAGVPALLVPFPFAVDDHQTGNAAFLAEAGAAWLVQQKDLSAEALAELIAGIDRNRLAAMSEQAVRLAKPDATGRVADICEALAK</sequence>
<organism>
    <name type="scientific">Thiobacillus denitrificans (strain ATCC 25259 / T1)</name>
    <dbReference type="NCBI Taxonomy" id="292415"/>
    <lineage>
        <taxon>Bacteria</taxon>
        <taxon>Pseudomonadati</taxon>
        <taxon>Pseudomonadota</taxon>
        <taxon>Betaproteobacteria</taxon>
        <taxon>Nitrosomonadales</taxon>
        <taxon>Thiobacillaceae</taxon>
        <taxon>Thiobacillus</taxon>
    </lineage>
</organism>
<evidence type="ECO:0000255" key="1">
    <source>
        <dbReference type="HAMAP-Rule" id="MF_00033"/>
    </source>
</evidence>
<dbReference type="EC" id="2.4.1.227" evidence="1"/>
<dbReference type="EMBL" id="CP000116">
    <property type="protein sequence ID" value="AAZ96072.1"/>
    <property type="molecule type" value="Genomic_DNA"/>
</dbReference>
<dbReference type="RefSeq" id="WP_011310632.1">
    <property type="nucleotide sequence ID" value="NC_007404.1"/>
</dbReference>
<dbReference type="SMR" id="Q3SMH3"/>
<dbReference type="STRING" id="292415.Tbd_0119"/>
<dbReference type="CAZy" id="GT28">
    <property type="family name" value="Glycosyltransferase Family 28"/>
</dbReference>
<dbReference type="KEGG" id="tbd:Tbd_0119"/>
<dbReference type="eggNOG" id="COG0707">
    <property type="taxonomic scope" value="Bacteria"/>
</dbReference>
<dbReference type="HOGENOM" id="CLU_037404_2_0_4"/>
<dbReference type="OrthoDB" id="9808936at2"/>
<dbReference type="UniPathway" id="UPA00219"/>
<dbReference type="Proteomes" id="UP000008291">
    <property type="component" value="Chromosome"/>
</dbReference>
<dbReference type="GO" id="GO:0005886">
    <property type="term" value="C:plasma membrane"/>
    <property type="evidence" value="ECO:0007669"/>
    <property type="project" value="UniProtKB-SubCell"/>
</dbReference>
<dbReference type="GO" id="GO:0051991">
    <property type="term" value="F:UDP-N-acetyl-D-glucosamine:N-acetylmuramoyl-L-alanyl-D-glutamyl-meso-2,6-diaminopimelyl-D-alanyl-D-alanine-diphosphoundecaprenol 4-beta-N-acetylglucosaminlytransferase activity"/>
    <property type="evidence" value="ECO:0007669"/>
    <property type="project" value="RHEA"/>
</dbReference>
<dbReference type="GO" id="GO:0050511">
    <property type="term" value="F:undecaprenyldiphospho-muramoylpentapeptide beta-N-acetylglucosaminyltransferase activity"/>
    <property type="evidence" value="ECO:0007669"/>
    <property type="project" value="UniProtKB-UniRule"/>
</dbReference>
<dbReference type="GO" id="GO:0005975">
    <property type="term" value="P:carbohydrate metabolic process"/>
    <property type="evidence" value="ECO:0007669"/>
    <property type="project" value="InterPro"/>
</dbReference>
<dbReference type="GO" id="GO:0051301">
    <property type="term" value="P:cell division"/>
    <property type="evidence" value="ECO:0007669"/>
    <property type="project" value="UniProtKB-KW"/>
</dbReference>
<dbReference type="GO" id="GO:0071555">
    <property type="term" value="P:cell wall organization"/>
    <property type="evidence" value="ECO:0007669"/>
    <property type="project" value="UniProtKB-KW"/>
</dbReference>
<dbReference type="GO" id="GO:0030259">
    <property type="term" value="P:lipid glycosylation"/>
    <property type="evidence" value="ECO:0007669"/>
    <property type="project" value="UniProtKB-UniRule"/>
</dbReference>
<dbReference type="GO" id="GO:0009252">
    <property type="term" value="P:peptidoglycan biosynthetic process"/>
    <property type="evidence" value="ECO:0007669"/>
    <property type="project" value="UniProtKB-UniRule"/>
</dbReference>
<dbReference type="GO" id="GO:0008360">
    <property type="term" value="P:regulation of cell shape"/>
    <property type="evidence" value="ECO:0007669"/>
    <property type="project" value="UniProtKB-KW"/>
</dbReference>
<dbReference type="CDD" id="cd03785">
    <property type="entry name" value="GT28_MurG"/>
    <property type="match status" value="1"/>
</dbReference>
<dbReference type="Gene3D" id="3.40.50.2000">
    <property type="entry name" value="Glycogen Phosphorylase B"/>
    <property type="match status" value="2"/>
</dbReference>
<dbReference type="HAMAP" id="MF_00033">
    <property type="entry name" value="MurG"/>
    <property type="match status" value="1"/>
</dbReference>
<dbReference type="InterPro" id="IPR006009">
    <property type="entry name" value="GlcNAc_MurG"/>
</dbReference>
<dbReference type="InterPro" id="IPR007235">
    <property type="entry name" value="Glyco_trans_28_C"/>
</dbReference>
<dbReference type="InterPro" id="IPR004276">
    <property type="entry name" value="GlycoTrans_28_N"/>
</dbReference>
<dbReference type="NCBIfam" id="TIGR01133">
    <property type="entry name" value="murG"/>
    <property type="match status" value="1"/>
</dbReference>
<dbReference type="PANTHER" id="PTHR21015:SF22">
    <property type="entry name" value="GLYCOSYLTRANSFERASE"/>
    <property type="match status" value="1"/>
</dbReference>
<dbReference type="PANTHER" id="PTHR21015">
    <property type="entry name" value="UDP-N-ACETYLGLUCOSAMINE--N-ACETYLMURAMYL-(PENTAPEPTIDE) PYROPHOSPHORYL-UNDECAPRENOL N-ACETYLGLUCOSAMINE TRANSFERASE 1"/>
    <property type="match status" value="1"/>
</dbReference>
<dbReference type="Pfam" id="PF04101">
    <property type="entry name" value="Glyco_tran_28_C"/>
    <property type="match status" value="1"/>
</dbReference>
<dbReference type="Pfam" id="PF03033">
    <property type="entry name" value="Glyco_transf_28"/>
    <property type="match status" value="1"/>
</dbReference>
<dbReference type="SUPFAM" id="SSF53756">
    <property type="entry name" value="UDP-Glycosyltransferase/glycogen phosphorylase"/>
    <property type="match status" value="1"/>
</dbReference>
<protein>
    <recommendedName>
        <fullName evidence="1">UDP-N-acetylglucosamine--N-acetylmuramyl-(pentapeptide) pyrophosphoryl-undecaprenol N-acetylglucosamine transferase</fullName>
        <ecNumber evidence="1">2.4.1.227</ecNumber>
    </recommendedName>
    <alternativeName>
        <fullName evidence="1">Undecaprenyl-PP-MurNAc-pentapeptide-UDPGlcNAc GlcNAc transferase</fullName>
    </alternativeName>
</protein>
<gene>
    <name evidence="1" type="primary">murG</name>
    <name type="ordered locus">Tbd_0119</name>
</gene>
<keyword id="KW-0131">Cell cycle</keyword>
<keyword id="KW-0132">Cell division</keyword>
<keyword id="KW-0997">Cell inner membrane</keyword>
<keyword id="KW-1003">Cell membrane</keyword>
<keyword id="KW-0133">Cell shape</keyword>
<keyword id="KW-0961">Cell wall biogenesis/degradation</keyword>
<keyword id="KW-0328">Glycosyltransferase</keyword>
<keyword id="KW-0472">Membrane</keyword>
<keyword id="KW-0573">Peptidoglycan synthesis</keyword>
<keyword id="KW-1185">Reference proteome</keyword>
<keyword id="KW-0808">Transferase</keyword>
<accession>Q3SMH3</accession>
<feature type="chain" id="PRO_0000225109" description="UDP-N-acetylglucosamine--N-acetylmuramyl-(pentapeptide) pyrophosphoryl-undecaprenol N-acetylglucosamine transferase">
    <location>
        <begin position="1"/>
        <end position="366"/>
    </location>
</feature>
<feature type="binding site" evidence="1">
    <location>
        <begin position="15"/>
        <end position="17"/>
    </location>
    <ligand>
        <name>UDP-N-acetyl-alpha-D-glucosamine</name>
        <dbReference type="ChEBI" id="CHEBI:57705"/>
    </ligand>
</feature>
<feature type="binding site" evidence="1">
    <location>
        <position position="127"/>
    </location>
    <ligand>
        <name>UDP-N-acetyl-alpha-D-glucosamine</name>
        <dbReference type="ChEBI" id="CHEBI:57705"/>
    </ligand>
</feature>
<feature type="binding site" evidence="1">
    <location>
        <position position="175"/>
    </location>
    <ligand>
        <name>UDP-N-acetyl-alpha-D-glucosamine</name>
        <dbReference type="ChEBI" id="CHEBI:57705"/>
    </ligand>
</feature>
<feature type="binding site" evidence="1">
    <location>
        <position position="201"/>
    </location>
    <ligand>
        <name>UDP-N-acetyl-alpha-D-glucosamine</name>
        <dbReference type="ChEBI" id="CHEBI:57705"/>
    </ligand>
</feature>
<feature type="binding site" evidence="1">
    <location>
        <position position="255"/>
    </location>
    <ligand>
        <name>UDP-N-acetyl-alpha-D-glucosamine</name>
        <dbReference type="ChEBI" id="CHEBI:57705"/>
    </ligand>
</feature>
<feature type="binding site" evidence="1">
    <location>
        <position position="300"/>
    </location>
    <ligand>
        <name>UDP-N-acetyl-alpha-D-glucosamine</name>
        <dbReference type="ChEBI" id="CHEBI:57705"/>
    </ligand>
</feature>
<reference key="1">
    <citation type="journal article" date="2006" name="J. Bacteriol.">
        <title>The genome sequence of the obligately chemolithoautotrophic, facultatively anaerobic bacterium Thiobacillus denitrificans.</title>
        <authorList>
            <person name="Beller H.R."/>
            <person name="Chain P.S."/>
            <person name="Letain T.E."/>
            <person name="Chakicherla A."/>
            <person name="Larimer F.W."/>
            <person name="Richardson P.M."/>
            <person name="Coleman M.A."/>
            <person name="Wood A.P."/>
            <person name="Kelly D.P."/>
        </authorList>
    </citation>
    <scope>NUCLEOTIDE SEQUENCE [LARGE SCALE GENOMIC DNA]</scope>
    <source>
        <strain>ATCC 25259 / T1</strain>
    </source>
</reference>
<name>MURG_THIDA</name>
<comment type="function">
    <text evidence="1">Cell wall formation. Catalyzes the transfer of a GlcNAc subunit on undecaprenyl-pyrophosphoryl-MurNAc-pentapeptide (lipid intermediate I) to form undecaprenyl-pyrophosphoryl-MurNAc-(pentapeptide)GlcNAc (lipid intermediate II).</text>
</comment>
<comment type="catalytic activity">
    <reaction evidence="1">
        <text>di-trans,octa-cis-undecaprenyl diphospho-N-acetyl-alpha-D-muramoyl-L-alanyl-D-glutamyl-meso-2,6-diaminopimeloyl-D-alanyl-D-alanine + UDP-N-acetyl-alpha-D-glucosamine = di-trans,octa-cis-undecaprenyl diphospho-[N-acetyl-alpha-D-glucosaminyl-(1-&gt;4)]-N-acetyl-alpha-D-muramoyl-L-alanyl-D-glutamyl-meso-2,6-diaminopimeloyl-D-alanyl-D-alanine + UDP + H(+)</text>
        <dbReference type="Rhea" id="RHEA:31227"/>
        <dbReference type="ChEBI" id="CHEBI:15378"/>
        <dbReference type="ChEBI" id="CHEBI:57705"/>
        <dbReference type="ChEBI" id="CHEBI:58223"/>
        <dbReference type="ChEBI" id="CHEBI:61387"/>
        <dbReference type="ChEBI" id="CHEBI:61388"/>
        <dbReference type="EC" id="2.4.1.227"/>
    </reaction>
</comment>
<comment type="pathway">
    <text evidence="1">Cell wall biogenesis; peptidoglycan biosynthesis.</text>
</comment>
<comment type="subcellular location">
    <subcellularLocation>
        <location evidence="1">Cell inner membrane</location>
        <topology evidence="1">Peripheral membrane protein</topology>
        <orientation evidence="1">Cytoplasmic side</orientation>
    </subcellularLocation>
</comment>
<comment type="similarity">
    <text evidence="1">Belongs to the glycosyltransferase 28 family. MurG subfamily.</text>
</comment>